<comment type="function">
    <text evidence="1">Functions in the biosynthesis of branched-chain amino acids. Catalyzes the dehydration of (2R,3R)-2,3-dihydroxy-3-methylpentanoate (2,3-dihydroxy-3-methylvalerate) into 2-oxo-3-methylpentanoate (2-oxo-3-methylvalerate) and of (2R)-2,3-dihydroxy-3-methylbutanoate (2,3-dihydroxyisovalerate) into 2-oxo-3-methylbutanoate (2-oxoisovalerate), the penultimate precursor to L-isoleucine and L-valine, respectively.</text>
</comment>
<comment type="catalytic activity">
    <reaction evidence="1">
        <text>(2R)-2,3-dihydroxy-3-methylbutanoate = 3-methyl-2-oxobutanoate + H2O</text>
        <dbReference type="Rhea" id="RHEA:24809"/>
        <dbReference type="ChEBI" id="CHEBI:11851"/>
        <dbReference type="ChEBI" id="CHEBI:15377"/>
        <dbReference type="ChEBI" id="CHEBI:49072"/>
        <dbReference type="EC" id="4.2.1.9"/>
    </reaction>
    <physiologicalReaction direction="left-to-right" evidence="1">
        <dbReference type="Rhea" id="RHEA:24810"/>
    </physiologicalReaction>
</comment>
<comment type="catalytic activity">
    <reaction evidence="1">
        <text>(2R,3R)-2,3-dihydroxy-3-methylpentanoate = (S)-3-methyl-2-oxopentanoate + H2O</text>
        <dbReference type="Rhea" id="RHEA:27694"/>
        <dbReference type="ChEBI" id="CHEBI:15377"/>
        <dbReference type="ChEBI" id="CHEBI:35146"/>
        <dbReference type="ChEBI" id="CHEBI:49258"/>
        <dbReference type="EC" id="4.2.1.9"/>
    </reaction>
    <physiologicalReaction direction="left-to-right" evidence="1">
        <dbReference type="Rhea" id="RHEA:27695"/>
    </physiologicalReaction>
</comment>
<comment type="cofactor">
    <cofactor evidence="1">
        <name>[2Fe-2S] cluster</name>
        <dbReference type="ChEBI" id="CHEBI:190135"/>
    </cofactor>
    <text evidence="1">Binds 1 [2Fe-2S] cluster per subunit. This cluster acts as a Lewis acid cofactor.</text>
</comment>
<comment type="cofactor">
    <cofactor evidence="1">
        <name>Mg(2+)</name>
        <dbReference type="ChEBI" id="CHEBI:18420"/>
    </cofactor>
</comment>
<comment type="pathway">
    <text evidence="1">Amino-acid biosynthesis; L-isoleucine biosynthesis; L-isoleucine from 2-oxobutanoate: step 3/4.</text>
</comment>
<comment type="pathway">
    <text evidence="1">Amino-acid biosynthesis; L-valine biosynthesis; L-valine from pyruvate: step 3/4.</text>
</comment>
<comment type="subunit">
    <text evidence="1">Homodimer.</text>
</comment>
<comment type="similarity">
    <text evidence="1">Belongs to the IlvD/Edd family.</text>
</comment>
<proteinExistence type="inferred from homology"/>
<reference key="1">
    <citation type="submission" date="2007-08" db="EMBL/GenBank/DDBJ databases">
        <title>Complete sequence of Roseiflexus castenholzii DSM 13941.</title>
        <authorList>
            <consortium name="US DOE Joint Genome Institute"/>
            <person name="Copeland A."/>
            <person name="Lucas S."/>
            <person name="Lapidus A."/>
            <person name="Barry K."/>
            <person name="Glavina del Rio T."/>
            <person name="Dalin E."/>
            <person name="Tice H."/>
            <person name="Pitluck S."/>
            <person name="Thompson L.S."/>
            <person name="Brettin T."/>
            <person name="Bruce D."/>
            <person name="Detter J.C."/>
            <person name="Han C."/>
            <person name="Tapia R."/>
            <person name="Schmutz J."/>
            <person name="Larimer F."/>
            <person name="Land M."/>
            <person name="Hauser L."/>
            <person name="Kyrpides N."/>
            <person name="Mikhailova N."/>
            <person name="Bryant D.A."/>
            <person name="Hanada S."/>
            <person name="Tsukatani Y."/>
            <person name="Richardson P."/>
        </authorList>
    </citation>
    <scope>NUCLEOTIDE SEQUENCE [LARGE SCALE GENOMIC DNA]</scope>
    <source>
        <strain>DSM 13941 / HLO8</strain>
    </source>
</reference>
<protein>
    <recommendedName>
        <fullName evidence="1">Dihydroxy-acid dehydratase</fullName>
        <shortName evidence="1">DAD</shortName>
        <ecNumber evidence="1">4.2.1.9</ecNumber>
    </recommendedName>
</protein>
<gene>
    <name evidence="1" type="primary">ilvD</name>
    <name type="ordered locus">Rcas_2979</name>
</gene>
<name>ILVD_ROSCS</name>
<accession>A7NNA3</accession>
<organism>
    <name type="scientific">Roseiflexus castenholzii (strain DSM 13941 / HLO8)</name>
    <dbReference type="NCBI Taxonomy" id="383372"/>
    <lineage>
        <taxon>Bacteria</taxon>
        <taxon>Bacillati</taxon>
        <taxon>Chloroflexota</taxon>
        <taxon>Chloroflexia</taxon>
        <taxon>Chloroflexales</taxon>
        <taxon>Roseiflexineae</taxon>
        <taxon>Roseiflexaceae</taxon>
        <taxon>Roseiflexus</taxon>
    </lineage>
</organism>
<feature type="chain" id="PRO_1000073985" description="Dihydroxy-acid dehydratase">
    <location>
        <begin position="1"/>
        <end position="559"/>
    </location>
</feature>
<feature type="active site" description="Proton acceptor" evidence="1">
    <location>
        <position position="473"/>
    </location>
</feature>
<feature type="binding site" evidence="1">
    <location>
        <position position="52"/>
    </location>
    <ligand>
        <name>[2Fe-2S] cluster</name>
        <dbReference type="ChEBI" id="CHEBI:190135"/>
    </ligand>
</feature>
<feature type="binding site" evidence="1">
    <location>
        <position position="84"/>
    </location>
    <ligand>
        <name>Mg(2+)</name>
        <dbReference type="ChEBI" id="CHEBI:18420"/>
    </ligand>
</feature>
<feature type="binding site" evidence="1">
    <location>
        <position position="125"/>
    </location>
    <ligand>
        <name>[2Fe-2S] cluster</name>
        <dbReference type="ChEBI" id="CHEBI:190135"/>
    </ligand>
</feature>
<feature type="binding site" evidence="1">
    <location>
        <position position="126"/>
    </location>
    <ligand>
        <name>Mg(2+)</name>
        <dbReference type="ChEBI" id="CHEBI:18420"/>
    </ligand>
</feature>
<feature type="binding site" description="via carbamate group" evidence="1">
    <location>
        <position position="127"/>
    </location>
    <ligand>
        <name>Mg(2+)</name>
        <dbReference type="ChEBI" id="CHEBI:18420"/>
    </ligand>
</feature>
<feature type="binding site" evidence="1">
    <location>
        <position position="197"/>
    </location>
    <ligand>
        <name>[2Fe-2S] cluster</name>
        <dbReference type="ChEBI" id="CHEBI:190135"/>
    </ligand>
</feature>
<feature type="binding site" evidence="1">
    <location>
        <position position="447"/>
    </location>
    <ligand>
        <name>Mg(2+)</name>
        <dbReference type="ChEBI" id="CHEBI:18420"/>
    </ligand>
</feature>
<feature type="modified residue" description="N6-carboxylysine" evidence="1">
    <location>
        <position position="127"/>
    </location>
</feature>
<sequence>MSSDLKRHSRTITDGRTRAGARAMLKAIGFTDEDLAKPIIGIANTWIETMPCNINLRALAARVKEGVRAAGGTPMEFNTVAISDGVTMGTEGMKASLISRDLIADSIELMGRGYMFDAIIALVACDKTIPGAAMGLTRLNVPGFLLYGGSIAPGHWRGKEITIQHVYEAIGAVAAGKMTDEELKEIEDAACPGPGACGGQYTANTMATVMEIIGLSPIGTAAVPAADPRKDSVGYRAGQLIMDVLRRDLKPRDILTRAAFENAIASVALTGGSTNAVLHLLALAREAGVPLTLDDFDTISRRTPLCCDLMPSGKYSAIHVDQAGGIQVIAKRLVDGGFAHGDAITVTGRTLAEEAADAVETPGQDVIRPLDNPIKPTGGLLVLRGNLAPEGSVVKLFGYERTYHRGPARVFDSEEAAMAAIVGGEIRPDDIVVIRYEGPRGGPGMREMLGVTSAIVGAGLGQSVSLVTDGRFSGATRGVMIGHVAPEAARGGPLAIVQEGDEIEINLDERRVDLVLSEEEIADRLLAWQPPAPRFEWGVMARYSALVSSASEGAVLVTP</sequence>
<keyword id="KW-0001">2Fe-2S</keyword>
<keyword id="KW-0028">Amino-acid biosynthesis</keyword>
<keyword id="KW-0100">Branched-chain amino acid biosynthesis</keyword>
<keyword id="KW-0408">Iron</keyword>
<keyword id="KW-0411">Iron-sulfur</keyword>
<keyword id="KW-0456">Lyase</keyword>
<keyword id="KW-0460">Magnesium</keyword>
<keyword id="KW-0479">Metal-binding</keyword>
<keyword id="KW-1185">Reference proteome</keyword>
<evidence type="ECO:0000255" key="1">
    <source>
        <dbReference type="HAMAP-Rule" id="MF_00012"/>
    </source>
</evidence>
<dbReference type="EC" id="4.2.1.9" evidence="1"/>
<dbReference type="EMBL" id="CP000804">
    <property type="protein sequence ID" value="ABU59036.1"/>
    <property type="molecule type" value="Genomic_DNA"/>
</dbReference>
<dbReference type="RefSeq" id="WP_012121460.1">
    <property type="nucleotide sequence ID" value="NC_009767.1"/>
</dbReference>
<dbReference type="SMR" id="A7NNA3"/>
<dbReference type="STRING" id="383372.Rcas_2979"/>
<dbReference type="KEGG" id="rca:Rcas_2979"/>
<dbReference type="eggNOG" id="COG0129">
    <property type="taxonomic scope" value="Bacteria"/>
</dbReference>
<dbReference type="HOGENOM" id="CLU_014271_4_2_0"/>
<dbReference type="OrthoDB" id="9807077at2"/>
<dbReference type="UniPathway" id="UPA00047">
    <property type="reaction ID" value="UER00057"/>
</dbReference>
<dbReference type="UniPathway" id="UPA00049">
    <property type="reaction ID" value="UER00061"/>
</dbReference>
<dbReference type="Proteomes" id="UP000000263">
    <property type="component" value="Chromosome"/>
</dbReference>
<dbReference type="GO" id="GO:0051537">
    <property type="term" value="F:2 iron, 2 sulfur cluster binding"/>
    <property type="evidence" value="ECO:0007669"/>
    <property type="project" value="UniProtKB-UniRule"/>
</dbReference>
<dbReference type="GO" id="GO:0004160">
    <property type="term" value="F:dihydroxy-acid dehydratase activity"/>
    <property type="evidence" value="ECO:0007669"/>
    <property type="project" value="UniProtKB-UniRule"/>
</dbReference>
<dbReference type="GO" id="GO:0000287">
    <property type="term" value="F:magnesium ion binding"/>
    <property type="evidence" value="ECO:0007669"/>
    <property type="project" value="UniProtKB-UniRule"/>
</dbReference>
<dbReference type="GO" id="GO:0009097">
    <property type="term" value="P:isoleucine biosynthetic process"/>
    <property type="evidence" value="ECO:0007669"/>
    <property type="project" value="UniProtKB-UniRule"/>
</dbReference>
<dbReference type="GO" id="GO:0009099">
    <property type="term" value="P:L-valine biosynthetic process"/>
    <property type="evidence" value="ECO:0007669"/>
    <property type="project" value="UniProtKB-UniRule"/>
</dbReference>
<dbReference type="FunFam" id="3.50.30.80:FF:000001">
    <property type="entry name" value="Dihydroxy-acid dehydratase"/>
    <property type="match status" value="1"/>
</dbReference>
<dbReference type="Gene3D" id="3.50.30.80">
    <property type="entry name" value="IlvD/EDD C-terminal domain-like"/>
    <property type="match status" value="1"/>
</dbReference>
<dbReference type="HAMAP" id="MF_00012">
    <property type="entry name" value="IlvD"/>
    <property type="match status" value="1"/>
</dbReference>
<dbReference type="InterPro" id="IPR050165">
    <property type="entry name" value="DHAD_IlvD/Edd"/>
</dbReference>
<dbReference type="InterPro" id="IPR042096">
    <property type="entry name" value="Dihydro-acid_dehy_C"/>
</dbReference>
<dbReference type="InterPro" id="IPR004404">
    <property type="entry name" value="DihydroxyA_deHydtase"/>
</dbReference>
<dbReference type="InterPro" id="IPR020558">
    <property type="entry name" value="DiOHA_6PGluconate_deHydtase_CS"/>
</dbReference>
<dbReference type="InterPro" id="IPR056740">
    <property type="entry name" value="ILV_EDD_C"/>
</dbReference>
<dbReference type="InterPro" id="IPR000581">
    <property type="entry name" value="ILV_EDD_N"/>
</dbReference>
<dbReference type="InterPro" id="IPR037237">
    <property type="entry name" value="IlvD/EDD_N"/>
</dbReference>
<dbReference type="NCBIfam" id="TIGR00110">
    <property type="entry name" value="ilvD"/>
    <property type="match status" value="1"/>
</dbReference>
<dbReference type="NCBIfam" id="NF002068">
    <property type="entry name" value="PRK00911.1"/>
    <property type="match status" value="1"/>
</dbReference>
<dbReference type="PANTHER" id="PTHR21000">
    <property type="entry name" value="DIHYDROXY-ACID DEHYDRATASE DAD"/>
    <property type="match status" value="1"/>
</dbReference>
<dbReference type="PANTHER" id="PTHR21000:SF5">
    <property type="entry name" value="DIHYDROXY-ACID DEHYDRATASE, MITOCHONDRIAL"/>
    <property type="match status" value="1"/>
</dbReference>
<dbReference type="Pfam" id="PF24877">
    <property type="entry name" value="ILV_EDD_C"/>
    <property type="match status" value="1"/>
</dbReference>
<dbReference type="Pfam" id="PF00920">
    <property type="entry name" value="ILVD_EDD_N"/>
    <property type="match status" value="1"/>
</dbReference>
<dbReference type="SUPFAM" id="SSF143975">
    <property type="entry name" value="IlvD/EDD N-terminal domain-like"/>
    <property type="match status" value="1"/>
</dbReference>
<dbReference type="SUPFAM" id="SSF52016">
    <property type="entry name" value="LeuD/IlvD-like"/>
    <property type="match status" value="1"/>
</dbReference>
<dbReference type="PROSITE" id="PS00886">
    <property type="entry name" value="ILVD_EDD_1"/>
    <property type="match status" value="1"/>
</dbReference>
<dbReference type="PROSITE" id="PS00887">
    <property type="entry name" value="ILVD_EDD_2"/>
    <property type="match status" value="1"/>
</dbReference>